<evidence type="ECO:0000255" key="1">
    <source>
        <dbReference type="HAMAP-Rule" id="MF_01023"/>
    </source>
</evidence>
<organism>
    <name type="scientific">Nitrobacter hamburgensis (strain DSM 10229 / NCIMB 13809 / X14)</name>
    <dbReference type="NCBI Taxonomy" id="323097"/>
    <lineage>
        <taxon>Bacteria</taxon>
        <taxon>Pseudomonadati</taxon>
        <taxon>Pseudomonadota</taxon>
        <taxon>Alphaproteobacteria</taxon>
        <taxon>Hyphomicrobiales</taxon>
        <taxon>Nitrobacteraceae</taxon>
        <taxon>Nitrobacter</taxon>
    </lineage>
</organism>
<protein>
    <recommendedName>
        <fullName evidence="1">Histidinol-phosphate aminotransferase</fullName>
        <ecNumber evidence="1">2.6.1.9</ecNumber>
    </recommendedName>
    <alternativeName>
        <fullName evidence="1">Imidazole acetol-phosphate transaminase</fullName>
    </alternativeName>
</protein>
<feature type="chain" id="PRO_1000063487" description="Histidinol-phosphate aminotransferase">
    <location>
        <begin position="1"/>
        <end position="365"/>
    </location>
</feature>
<feature type="modified residue" description="N6-(pyridoxal phosphate)lysine" evidence="1">
    <location>
        <position position="221"/>
    </location>
</feature>
<name>HIS8_NITHX</name>
<reference key="1">
    <citation type="submission" date="2006-03" db="EMBL/GenBank/DDBJ databases">
        <title>Complete sequence of chromosome of Nitrobacter hamburgensis X14.</title>
        <authorList>
            <consortium name="US DOE Joint Genome Institute"/>
            <person name="Copeland A."/>
            <person name="Lucas S."/>
            <person name="Lapidus A."/>
            <person name="Barry K."/>
            <person name="Detter J.C."/>
            <person name="Glavina del Rio T."/>
            <person name="Hammon N."/>
            <person name="Israni S."/>
            <person name="Dalin E."/>
            <person name="Tice H."/>
            <person name="Pitluck S."/>
            <person name="Chain P."/>
            <person name="Malfatti S."/>
            <person name="Shin M."/>
            <person name="Vergez L."/>
            <person name="Schmutz J."/>
            <person name="Larimer F."/>
            <person name="Land M."/>
            <person name="Hauser L."/>
            <person name="Kyrpides N."/>
            <person name="Ivanova N."/>
            <person name="Ward B."/>
            <person name="Arp D."/>
            <person name="Klotz M."/>
            <person name="Stein L."/>
            <person name="O'Mullan G."/>
            <person name="Starkenburg S."/>
            <person name="Sayavedra L."/>
            <person name="Poret-Peterson A.T."/>
            <person name="Gentry M.E."/>
            <person name="Bruce D."/>
            <person name="Richardson P."/>
        </authorList>
    </citation>
    <scope>NUCLEOTIDE SEQUENCE [LARGE SCALE GENOMIC DNA]</scope>
    <source>
        <strain>DSM 10229 / NCIMB 13809 / X14</strain>
    </source>
</reference>
<accession>Q1QQD5</accession>
<proteinExistence type="inferred from homology"/>
<gene>
    <name evidence="1" type="primary">hisC</name>
    <name type="ordered locus">Nham_0674</name>
</gene>
<comment type="catalytic activity">
    <reaction evidence="1">
        <text>L-histidinol phosphate + 2-oxoglutarate = 3-(imidazol-4-yl)-2-oxopropyl phosphate + L-glutamate</text>
        <dbReference type="Rhea" id="RHEA:23744"/>
        <dbReference type="ChEBI" id="CHEBI:16810"/>
        <dbReference type="ChEBI" id="CHEBI:29985"/>
        <dbReference type="ChEBI" id="CHEBI:57766"/>
        <dbReference type="ChEBI" id="CHEBI:57980"/>
        <dbReference type="EC" id="2.6.1.9"/>
    </reaction>
</comment>
<comment type="cofactor">
    <cofactor evidence="1">
        <name>pyridoxal 5'-phosphate</name>
        <dbReference type="ChEBI" id="CHEBI:597326"/>
    </cofactor>
</comment>
<comment type="pathway">
    <text evidence="1">Amino-acid biosynthesis; L-histidine biosynthesis; L-histidine from 5-phospho-alpha-D-ribose 1-diphosphate: step 7/9.</text>
</comment>
<comment type="subunit">
    <text evidence="1">Homodimer.</text>
</comment>
<comment type="similarity">
    <text evidence="1">Belongs to the class-II pyridoxal-phosphate-dependent aminotransferase family. Histidinol-phosphate aminotransferase subfamily.</text>
</comment>
<dbReference type="EC" id="2.6.1.9" evidence="1"/>
<dbReference type="EMBL" id="CP000319">
    <property type="protein sequence ID" value="ABE61562.1"/>
    <property type="molecule type" value="Genomic_DNA"/>
</dbReference>
<dbReference type="RefSeq" id="WP_011509266.1">
    <property type="nucleotide sequence ID" value="NC_007964.1"/>
</dbReference>
<dbReference type="SMR" id="Q1QQD5"/>
<dbReference type="STRING" id="323097.Nham_0674"/>
<dbReference type="KEGG" id="nha:Nham_0674"/>
<dbReference type="eggNOG" id="COG0079">
    <property type="taxonomic scope" value="Bacteria"/>
</dbReference>
<dbReference type="HOGENOM" id="CLU_017584_3_3_5"/>
<dbReference type="OrthoDB" id="9809616at2"/>
<dbReference type="UniPathway" id="UPA00031">
    <property type="reaction ID" value="UER00012"/>
</dbReference>
<dbReference type="Proteomes" id="UP000001953">
    <property type="component" value="Chromosome"/>
</dbReference>
<dbReference type="GO" id="GO:0004400">
    <property type="term" value="F:histidinol-phosphate transaminase activity"/>
    <property type="evidence" value="ECO:0007669"/>
    <property type="project" value="UniProtKB-UniRule"/>
</dbReference>
<dbReference type="GO" id="GO:0030170">
    <property type="term" value="F:pyridoxal phosphate binding"/>
    <property type="evidence" value="ECO:0007669"/>
    <property type="project" value="InterPro"/>
</dbReference>
<dbReference type="GO" id="GO:0000105">
    <property type="term" value="P:L-histidine biosynthetic process"/>
    <property type="evidence" value="ECO:0007669"/>
    <property type="project" value="UniProtKB-UniRule"/>
</dbReference>
<dbReference type="CDD" id="cd00609">
    <property type="entry name" value="AAT_like"/>
    <property type="match status" value="1"/>
</dbReference>
<dbReference type="Gene3D" id="3.90.1150.10">
    <property type="entry name" value="Aspartate Aminotransferase, domain 1"/>
    <property type="match status" value="1"/>
</dbReference>
<dbReference type="Gene3D" id="3.40.640.10">
    <property type="entry name" value="Type I PLP-dependent aspartate aminotransferase-like (Major domain)"/>
    <property type="match status" value="1"/>
</dbReference>
<dbReference type="HAMAP" id="MF_01023">
    <property type="entry name" value="HisC_aminotrans_2"/>
    <property type="match status" value="1"/>
</dbReference>
<dbReference type="InterPro" id="IPR004839">
    <property type="entry name" value="Aminotransferase_I/II_large"/>
</dbReference>
<dbReference type="InterPro" id="IPR005861">
    <property type="entry name" value="HisP_aminotrans"/>
</dbReference>
<dbReference type="InterPro" id="IPR050106">
    <property type="entry name" value="HistidinolP_aminotransfase"/>
</dbReference>
<dbReference type="InterPro" id="IPR015424">
    <property type="entry name" value="PyrdxlP-dep_Trfase"/>
</dbReference>
<dbReference type="InterPro" id="IPR015421">
    <property type="entry name" value="PyrdxlP-dep_Trfase_major"/>
</dbReference>
<dbReference type="InterPro" id="IPR015422">
    <property type="entry name" value="PyrdxlP-dep_Trfase_small"/>
</dbReference>
<dbReference type="PANTHER" id="PTHR43643:SF3">
    <property type="entry name" value="HISTIDINOL-PHOSPHATE AMINOTRANSFERASE"/>
    <property type="match status" value="1"/>
</dbReference>
<dbReference type="PANTHER" id="PTHR43643">
    <property type="entry name" value="HISTIDINOL-PHOSPHATE AMINOTRANSFERASE 2"/>
    <property type="match status" value="1"/>
</dbReference>
<dbReference type="Pfam" id="PF00155">
    <property type="entry name" value="Aminotran_1_2"/>
    <property type="match status" value="1"/>
</dbReference>
<dbReference type="SUPFAM" id="SSF53383">
    <property type="entry name" value="PLP-dependent transferases"/>
    <property type="match status" value="1"/>
</dbReference>
<keyword id="KW-0028">Amino-acid biosynthesis</keyword>
<keyword id="KW-0032">Aminotransferase</keyword>
<keyword id="KW-0368">Histidine biosynthesis</keyword>
<keyword id="KW-0663">Pyridoxal phosphate</keyword>
<keyword id="KW-1185">Reference proteome</keyword>
<keyword id="KW-0808">Transferase</keyword>
<sequence>MSRPVPNPGILDIAPYTPGKSPVPEAGRKVFKLSANETPFGPSPKAMDAYRNAVAHLQDYPEGTSRVLREAIGRAYGLDPDRIICGAGSDEILNLLAHVYLSHGDEAVSTTHSFLVYPIATTANGAENVVAPEVDYTADVDAILQRVTPKTKMVWLANPNNPTGTYLPFDEIKRLHGGLPPHVLLVLDAAYSDYVSRNDYELGIELAATTGNTVLTHTFSKIHGLAALRIGWMFGPAHVVDAVNRIRGPFNVSTPAMLAAAAAIGDTAHVQMSKVHTEKWRNWLTDEVTKLGLKVTPSVTNFILIHFPTTKGKTASEADAFLTKRGLVLRALDNYGLPNALRMTIGTEEANRLVADGLRDFMAQK</sequence>